<keyword id="KW-1185">Reference proteome</keyword>
<keyword id="KW-0687">Ribonucleoprotein</keyword>
<keyword id="KW-0689">Ribosomal protein</keyword>
<keyword id="KW-0694">RNA-binding</keyword>
<keyword id="KW-0699">rRNA-binding</keyword>
<evidence type="ECO:0000255" key="1">
    <source>
        <dbReference type="HAMAP-Rule" id="MF_01334"/>
    </source>
</evidence>
<evidence type="ECO:0000305" key="2"/>
<dbReference type="EMBL" id="CP000116">
    <property type="protein sequence ID" value="AAZ96341.1"/>
    <property type="molecule type" value="Genomic_DNA"/>
</dbReference>
<dbReference type="RefSeq" id="WP_011310901.1">
    <property type="nucleotide sequence ID" value="NC_007404.1"/>
</dbReference>
<dbReference type="SMR" id="Q3SLR4"/>
<dbReference type="STRING" id="292415.Tbd_0388"/>
<dbReference type="KEGG" id="tbd:Tbd_0388"/>
<dbReference type="eggNOG" id="COG1825">
    <property type="taxonomic scope" value="Bacteria"/>
</dbReference>
<dbReference type="HOGENOM" id="CLU_075939_0_1_4"/>
<dbReference type="OrthoDB" id="9806411at2"/>
<dbReference type="Proteomes" id="UP000008291">
    <property type="component" value="Chromosome"/>
</dbReference>
<dbReference type="GO" id="GO:0022625">
    <property type="term" value="C:cytosolic large ribosomal subunit"/>
    <property type="evidence" value="ECO:0007669"/>
    <property type="project" value="TreeGrafter"/>
</dbReference>
<dbReference type="GO" id="GO:0008097">
    <property type="term" value="F:5S rRNA binding"/>
    <property type="evidence" value="ECO:0007669"/>
    <property type="project" value="InterPro"/>
</dbReference>
<dbReference type="GO" id="GO:0003735">
    <property type="term" value="F:structural constituent of ribosome"/>
    <property type="evidence" value="ECO:0007669"/>
    <property type="project" value="InterPro"/>
</dbReference>
<dbReference type="GO" id="GO:0006412">
    <property type="term" value="P:translation"/>
    <property type="evidence" value="ECO:0007669"/>
    <property type="project" value="UniProtKB-UniRule"/>
</dbReference>
<dbReference type="CDD" id="cd00495">
    <property type="entry name" value="Ribosomal_L25_TL5_CTC"/>
    <property type="match status" value="1"/>
</dbReference>
<dbReference type="Gene3D" id="2.170.120.20">
    <property type="entry name" value="Ribosomal protein L25, beta domain"/>
    <property type="match status" value="1"/>
</dbReference>
<dbReference type="Gene3D" id="2.40.240.10">
    <property type="entry name" value="Ribosomal Protein L25, Chain P"/>
    <property type="match status" value="1"/>
</dbReference>
<dbReference type="HAMAP" id="MF_01336">
    <property type="entry name" value="Ribosomal_bL25"/>
    <property type="match status" value="1"/>
</dbReference>
<dbReference type="HAMAP" id="MF_01334">
    <property type="entry name" value="Ribosomal_bL25_CTC"/>
    <property type="match status" value="1"/>
</dbReference>
<dbReference type="InterPro" id="IPR020056">
    <property type="entry name" value="Rbsml_bL25/Gln-tRNA_synth_N"/>
</dbReference>
<dbReference type="InterPro" id="IPR011035">
    <property type="entry name" value="Ribosomal_bL25/Gln-tRNA_synth"/>
</dbReference>
<dbReference type="InterPro" id="IPR020057">
    <property type="entry name" value="Ribosomal_bL25_b-dom"/>
</dbReference>
<dbReference type="InterPro" id="IPR037121">
    <property type="entry name" value="Ribosomal_bL25_C"/>
</dbReference>
<dbReference type="InterPro" id="IPR001021">
    <property type="entry name" value="Ribosomal_bL25_long"/>
</dbReference>
<dbReference type="InterPro" id="IPR020055">
    <property type="entry name" value="Ribosomal_bL25_short"/>
</dbReference>
<dbReference type="InterPro" id="IPR029751">
    <property type="entry name" value="Ribosomal_L25_dom"/>
</dbReference>
<dbReference type="InterPro" id="IPR020930">
    <property type="entry name" value="Ribosomal_uL5_bac-type"/>
</dbReference>
<dbReference type="NCBIfam" id="TIGR00731">
    <property type="entry name" value="bL25_bact_ctc"/>
    <property type="match status" value="1"/>
</dbReference>
<dbReference type="NCBIfam" id="NF004128">
    <property type="entry name" value="PRK05618.1-2"/>
    <property type="match status" value="1"/>
</dbReference>
<dbReference type="NCBIfam" id="NF004130">
    <property type="entry name" value="PRK05618.1-5"/>
    <property type="match status" value="1"/>
</dbReference>
<dbReference type="NCBIfam" id="NF004612">
    <property type="entry name" value="PRK05943.1"/>
    <property type="match status" value="1"/>
</dbReference>
<dbReference type="PANTHER" id="PTHR33284">
    <property type="entry name" value="RIBOSOMAL PROTEIN L25/GLN-TRNA SYNTHETASE, ANTI-CODON-BINDING DOMAIN-CONTAINING PROTEIN"/>
    <property type="match status" value="1"/>
</dbReference>
<dbReference type="PANTHER" id="PTHR33284:SF1">
    <property type="entry name" value="RIBOSOMAL PROTEIN L25_GLN-TRNA SYNTHETASE, ANTI-CODON-BINDING DOMAIN-CONTAINING PROTEIN"/>
    <property type="match status" value="1"/>
</dbReference>
<dbReference type="Pfam" id="PF01386">
    <property type="entry name" value="Ribosomal_L25p"/>
    <property type="match status" value="1"/>
</dbReference>
<dbReference type="Pfam" id="PF14693">
    <property type="entry name" value="Ribosomal_TL5_C"/>
    <property type="match status" value="1"/>
</dbReference>
<dbReference type="SUPFAM" id="SSF50715">
    <property type="entry name" value="Ribosomal protein L25-like"/>
    <property type="match status" value="1"/>
</dbReference>
<protein>
    <recommendedName>
        <fullName evidence="1">Large ribosomal subunit protein bL25</fullName>
    </recommendedName>
    <alternativeName>
        <fullName evidence="2">50S ribosomal protein L25</fullName>
    </alternativeName>
    <alternativeName>
        <fullName evidence="1">General stress protein CTC</fullName>
    </alternativeName>
</protein>
<feature type="chain" id="PRO_0000244247" description="Large ribosomal subunit protein bL25">
    <location>
        <begin position="1"/>
        <end position="201"/>
    </location>
</feature>
<name>RL25_THIDA</name>
<organism>
    <name type="scientific">Thiobacillus denitrificans (strain ATCC 25259 / T1)</name>
    <dbReference type="NCBI Taxonomy" id="292415"/>
    <lineage>
        <taxon>Bacteria</taxon>
        <taxon>Pseudomonadati</taxon>
        <taxon>Pseudomonadota</taxon>
        <taxon>Betaproteobacteria</taxon>
        <taxon>Nitrosomonadales</taxon>
        <taxon>Thiobacillaceae</taxon>
        <taxon>Thiobacillus</taxon>
    </lineage>
</organism>
<comment type="function">
    <text evidence="1">This is one of the proteins that binds to the 5S RNA in the ribosome where it forms part of the central protuberance.</text>
</comment>
<comment type="subunit">
    <text evidence="1">Part of the 50S ribosomal subunit; part of the 5S rRNA/L5/L18/L25 subcomplex. Contacts the 5S rRNA. Binds to the 5S rRNA independently of L5 and L18.</text>
</comment>
<comment type="similarity">
    <text evidence="1">Belongs to the bacterial ribosomal protein bL25 family. CTC subfamily.</text>
</comment>
<proteinExistence type="inferred from homology"/>
<sequence length="201" mass="21669">MEIEVIASKRELQGTGASRRLRHAGKVPGIVYGGSTAPVQIELDHNALYHALRKEAFHASVLSLSVDGAKESVLLRDAQWHPYKQQVLHVDFQRVDKDHKIHVKVPLHFLNAEVSPGVKLGGGKPHHIVNELDVQCFPGSLPEFIEVDMGALEVGHSIHANDLVLPAGVELVAHVKQENPAVAVIHAPKGGVEETPAAPAA</sequence>
<gene>
    <name evidence="1" type="primary">rplY</name>
    <name evidence="1" type="synonym">ctc</name>
    <name type="ordered locus">Tbd_0388</name>
</gene>
<reference key="1">
    <citation type="journal article" date="2006" name="J. Bacteriol.">
        <title>The genome sequence of the obligately chemolithoautotrophic, facultatively anaerobic bacterium Thiobacillus denitrificans.</title>
        <authorList>
            <person name="Beller H.R."/>
            <person name="Chain P.S."/>
            <person name="Letain T.E."/>
            <person name="Chakicherla A."/>
            <person name="Larimer F.W."/>
            <person name="Richardson P.M."/>
            <person name="Coleman M.A."/>
            <person name="Wood A.P."/>
            <person name="Kelly D.P."/>
        </authorList>
    </citation>
    <scope>NUCLEOTIDE SEQUENCE [LARGE SCALE GENOMIC DNA]</scope>
    <source>
        <strain>ATCC 25259 / T1</strain>
    </source>
</reference>
<accession>Q3SLR4</accession>